<keyword id="KW-0007">Acetylation</keyword>
<keyword id="KW-0117">Actin capping</keyword>
<keyword id="KW-0009">Actin-binding</keyword>
<keyword id="KW-0597">Phosphoprotein</keyword>
<keyword id="KW-1185">Reference proteome</keyword>
<reference key="1">
    <citation type="submission" date="2006-09" db="EMBL/GenBank/DDBJ databases">
        <title>NISC comparative sequencing initiative.</title>
        <authorList>
            <person name="Antonellis A."/>
            <person name="Ayele K."/>
            <person name="Benjamin B."/>
            <person name="Blakesley R.W."/>
            <person name="Boakye A."/>
            <person name="Bouffard G.G."/>
            <person name="Brinkley C."/>
            <person name="Brooks S."/>
            <person name="Chu G."/>
            <person name="Coleman H."/>
            <person name="Engle J."/>
            <person name="Gestole M."/>
            <person name="Greene A."/>
            <person name="Guan X."/>
            <person name="Gupta J."/>
            <person name="Haghighi P."/>
            <person name="Han J."/>
            <person name="Hansen N."/>
            <person name="Ho S.-L."/>
            <person name="Hu P."/>
            <person name="Hunter G."/>
            <person name="Hurle B."/>
            <person name="Idol J.R."/>
            <person name="Kwong P."/>
            <person name="Laric P."/>
            <person name="Larson S."/>
            <person name="Lee-Lin S.-Q."/>
            <person name="Legaspi R."/>
            <person name="Madden M."/>
            <person name="Maduro Q.L."/>
            <person name="Maduro V.B."/>
            <person name="Margulies E.H."/>
            <person name="Masiello C."/>
            <person name="Maskeri B."/>
            <person name="McDowell J."/>
            <person name="Mojidi H.A."/>
            <person name="Mullikin J.C."/>
            <person name="Oestreicher J.S."/>
            <person name="Park M."/>
            <person name="Portnoy M.E."/>
            <person name="Prasad A."/>
            <person name="Puri O."/>
            <person name="Reddix-Dugue N."/>
            <person name="Schandler K."/>
            <person name="Schueler M.G."/>
            <person name="Sison C."/>
            <person name="Stantripop S."/>
            <person name="Stephen E."/>
            <person name="Taye A."/>
            <person name="Thomas J.W."/>
            <person name="Thomas P.J."/>
            <person name="Tsipouri V."/>
            <person name="Ung L."/>
            <person name="Vogt J.L."/>
            <person name="Wetherby K.D."/>
            <person name="Young A."/>
            <person name="Green E.D."/>
        </authorList>
    </citation>
    <scope>NUCLEOTIDE SEQUENCE [LARGE SCALE GENOMIC DNA]</scope>
</reference>
<sequence length="286" mass="32999">MADVEDQLSDDEKVRIAAKFIIHAPPGEFNEVFNDVRLLLNNDNLLREGAAHAFAQYNVDQFTPVKVEGYDEQVLITEHGDLGNGKFWDPKNRVSFKFDHLRKEATDPRPQEPENAVESWRHSVETAMRAYVKEHYPNGVCTVYGKTIDGQQTIIACIESHQFQAKNFWNGRWRSEWKFTITPSTTQVVGILKIQVHYYEDGNVQLVSHKDIQDSLTVSNEVQTAKEFIKIVEAAENEYQTAINENYQTMSDTTFKALRRQLPVTRTKIDWNKILSYKIGKEMQNA</sequence>
<name>CAZA2_ORNAN</name>
<dbReference type="EMBL" id="DP000185">
    <property type="protein sequence ID" value="ABI93676.1"/>
    <property type="molecule type" value="Genomic_DNA"/>
</dbReference>
<dbReference type="RefSeq" id="NP_001229662.1">
    <property type="nucleotide sequence ID" value="NM_001242733.1"/>
</dbReference>
<dbReference type="SMR" id="Q07E00"/>
<dbReference type="FunCoup" id="Q07E00">
    <property type="interactions" value="1775"/>
</dbReference>
<dbReference type="STRING" id="9258.ENSOANP00000001390"/>
<dbReference type="Ensembl" id="ENSOANT00000073324.1">
    <property type="protein sequence ID" value="ENSOANP00000041058.1"/>
    <property type="gene ID" value="ENSOANG00000038071.1"/>
</dbReference>
<dbReference type="GeneID" id="100079143"/>
<dbReference type="KEGG" id="oaa:100079143"/>
<dbReference type="CTD" id="830"/>
<dbReference type="eggNOG" id="KOG0836">
    <property type="taxonomic scope" value="Eukaryota"/>
</dbReference>
<dbReference type="GeneTree" id="ENSGT00950000183119"/>
<dbReference type="InParanoid" id="Q07E00"/>
<dbReference type="OMA" id="VACIEDH"/>
<dbReference type="OrthoDB" id="340550at2759"/>
<dbReference type="Proteomes" id="UP000002279">
    <property type="component" value="Chromosome 10"/>
</dbReference>
<dbReference type="Bgee" id="ENSOANG00000038071">
    <property type="expression patterns" value="Expressed in endometrium and 8 other cell types or tissues"/>
</dbReference>
<dbReference type="GO" id="GO:0005903">
    <property type="term" value="C:brush border"/>
    <property type="evidence" value="ECO:0007669"/>
    <property type="project" value="Ensembl"/>
</dbReference>
<dbReference type="GO" id="GO:0030863">
    <property type="term" value="C:cortical cytoskeleton"/>
    <property type="evidence" value="ECO:0000318"/>
    <property type="project" value="GO_Central"/>
</dbReference>
<dbReference type="GO" id="GO:0008290">
    <property type="term" value="C:F-actin capping protein complex"/>
    <property type="evidence" value="ECO:0000318"/>
    <property type="project" value="GO_Central"/>
</dbReference>
<dbReference type="GO" id="GO:0016020">
    <property type="term" value="C:membrane"/>
    <property type="evidence" value="ECO:0007669"/>
    <property type="project" value="Ensembl"/>
</dbReference>
<dbReference type="GO" id="GO:0051015">
    <property type="term" value="F:actin filament binding"/>
    <property type="evidence" value="ECO:0000318"/>
    <property type="project" value="GO_Central"/>
</dbReference>
<dbReference type="GO" id="GO:0030036">
    <property type="term" value="P:actin cytoskeleton organization"/>
    <property type="evidence" value="ECO:0000318"/>
    <property type="project" value="GO_Central"/>
</dbReference>
<dbReference type="GO" id="GO:0051016">
    <property type="term" value="P:barbed-end actin filament capping"/>
    <property type="evidence" value="ECO:0000318"/>
    <property type="project" value="GO_Central"/>
</dbReference>
<dbReference type="FunFam" id="3.30.1140.60:FF:000001">
    <property type="entry name" value="F-actin-capping protein subunit alpha"/>
    <property type="match status" value="1"/>
</dbReference>
<dbReference type="FunFam" id="3.90.1150.210:FF:000002">
    <property type="entry name" value="F-actin-capping protein subunit alpha"/>
    <property type="match status" value="1"/>
</dbReference>
<dbReference type="Gene3D" id="3.30.1140.60">
    <property type="entry name" value="F-actin capping protein, alpha subunit"/>
    <property type="match status" value="1"/>
</dbReference>
<dbReference type="Gene3D" id="3.90.1150.210">
    <property type="entry name" value="F-actin capping protein, beta subunit"/>
    <property type="match status" value="1"/>
</dbReference>
<dbReference type="InterPro" id="IPR002189">
    <property type="entry name" value="CapZ_alpha"/>
</dbReference>
<dbReference type="InterPro" id="IPR037282">
    <property type="entry name" value="CapZ_alpha/beta"/>
</dbReference>
<dbReference type="InterPro" id="IPR042276">
    <property type="entry name" value="CapZ_alpha/beta_2"/>
</dbReference>
<dbReference type="InterPro" id="IPR042489">
    <property type="entry name" value="CapZ_alpha_1"/>
</dbReference>
<dbReference type="InterPro" id="IPR017865">
    <property type="entry name" value="F-actin_cap_asu_CS"/>
</dbReference>
<dbReference type="PANTHER" id="PTHR10653">
    <property type="entry name" value="F-ACTIN-CAPPING PROTEIN SUBUNIT ALPHA"/>
    <property type="match status" value="1"/>
</dbReference>
<dbReference type="PANTHER" id="PTHR10653:SF2">
    <property type="entry name" value="F-ACTIN-CAPPING PROTEIN SUBUNIT ALPHA-2"/>
    <property type="match status" value="1"/>
</dbReference>
<dbReference type="Pfam" id="PF01267">
    <property type="entry name" value="F-actin_cap_A"/>
    <property type="match status" value="1"/>
</dbReference>
<dbReference type="PRINTS" id="PR00191">
    <property type="entry name" value="FACTINCAPA"/>
</dbReference>
<dbReference type="SUPFAM" id="SSF90096">
    <property type="entry name" value="Subunits of heterodimeric actin filament capping protein Capz"/>
    <property type="match status" value="1"/>
</dbReference>
<dbReference type="PROSITE" id="PS00748">
    <property type="entry name" value="F_ACTIN_CAPPING_A_1"/>
    <property type="match status" value="1"/>
</dbReference>
<dbReference type="PROSITE" id="PS00749">
    <property type="entry name" value="F_ACTIN_CAPPING_A_2"/>
    <property type="match status" value="1"/>
</dbReference>
<comment type="function">
    <text evidence="1">F-actin-capping proteins bind in a Ca(2+)-independent manner to the fast growing ends of actin filaments (barbed end) thereby blocking the exchange of subunits at these ends. Unlike other capping proteins (such as gelsolin and severin), these proteins do not sever actin filaments (By similarity).</text>
</comment>
<comment type="subunit">
    <text evidence="1">Component of the F-actin capping complex, composed of a heterodimer of an alpha and a beta subunit. Component of the WASH complex, composed of F-actin-capping protein subunit alpha (CAPZA1, CAPZA2 or CAPZA3), F-actin-capping protein subunit beta (CAPZB), WASHC1, WASHC2, WASHC3, WASHC4 and WASHC5. Interacts with RCSD1/CAPZIP (By similarity).</text>
</comment>
<comment type="similarity">
    <text evidence="3">Belongs to the F-actin-capping protein alpha subunit family.</text>
</comment>
<organism>
    <name type="scientific">Ornithorhynchus anatinus</name>
    <name type="common">Duckbill platypus</name>
    <dbReference type="NCBI Taxonomy" id="9258"/>
    <lineage>
        <taxon>Eukaryota</taxon>
        <taxon>Metazoa</taxon>
        <taxon>Chordata</taxon>
        <taxon>Craniata</taxon>
        <taxon>Vertebrata</taxon>
        <taxon>Euteleostomi</taxon>
        <taxon>Mammalia</taxon>
        <taxon>Monotremata</taxon>
        <taxon>Ornithorhynchidae</taxon>
        <taxon>Ornithorhynchus</taxon>
    </lineage>
</organism>
<accession>Q07E00</accession>
<proteinExistence type="inferred from homology"/>
<protein>
    <recommendedName>
        <fullName>F-actin-capping protein subunit alpha-2</fullName>
    </recommendedName>
    <alternativeName>
        <fullName>CapZ alpha-2</fullName>
    </alternativeName>
</protein>
<gene>
    <name type="primary">CAPZA2</name>
</gene>
<feature type="initiator methionine" description="Removed" evidence="2">
    <location>
        <position position="1"/>
    </location>
</feature>
<feature type="chain" id="PRO_0000260360" description="F-actin-capping protein subunit alpha-2">
    <location>
        <begin position="2"/>
        <end position="286"/>
    </location>
</feature>
<feature type="modified residue" description="N-acetylalanine" evidence="2">
    <location>
        <position position="2"/>
    </location>
</feature>
<feature type="modified residue" description="Phosphoserine" evidence="2">
    <location>
        <position position="9"/>
    </location>
</feature>
<evidence type="ECO:0000250" key="1"/>
<evidence type="ECO:0000250" key="2">
    <source>
        <dbReference type="UniProtKB" id="P47755"/>
    </source>
</evidence>
<evidence type="ECO:0000305" key="3"/>